<protein>
    <recommendedName>
        <fullName evidence="1">Membrane protein insertase YidC</fullName>
    </recommendedName>
    <alternativeName>
        <fullName evidence="1">Foldase YidC</fullName>
    </alternativeName>
    <alternativeName>
        <fullName evidence="1">Membrane integrase YidC</fullName>
    </alternativeName>
    <alternativeName>
        <fullName evidence="1">Membrane protein YidC</fullName>
    </alternativeName>
</protein>
<dbReference type="EMBL" id="CU928158">
    <property type="protein sequence ID" value="CAQ91436.1"/>
    <property type="molecule type" value="Genomic_DNA"/>
</dbReference>
<dbReference type="RefSeq" id="WP_000378248.1">
    <property type="nucleotide sequence ID" value="NC_011740.1"/>
</dbReference>
<dbReference type="SMR" id="B7LK48"/>
<dbReference type="GeneID" id="75059596"/>
<dbReference type="KEGG" id="efe:EFER_4002"/>
<dbReference type="HOGENOM" id="CLU_016535_3_0_6"/>
<dbReference type="OrthoDB" id="9780552at2"/>
<dbReference type="Proteomes" id="UP000000745">
    <property type="component" value="Chromosome"/>
</dbReference>
<dbReference type="GO" id="GO:0005886">
    <property type="term" value="C:plasma membrane"/>
    <property type="evidence" value="ECO:0007669"/>
    <property type="project" value="UniProtKB-SubCell"/>
</dbReference>
<dbReference type="GO" id="GO:0032977">
    <property type="term" value="F:membrane insertase activity"/>
    <property type="evidence" value="ECO:0007669"/>
    <property type="project" value="InterPro"/>
</dbReference>
<dbReference type="GO" id="GO:0051205">
    <property type="term" value="P:protein insertion into membrane"/>
    <property type="evidence" value="ECO:0007669"/>
    <property type="project" value="TreeGrafter"/>
</dbReference>
<dbReference type="GO" id="GO:0015031">
    <property type="term" value="P:protein transport"/>
    <property type="evidence" value="ECO:0007669"/>
    <property type="project" value="UniProtKB-KW"/>
</dbReference>
<dbReference type="CDD" id="cd20070">
    <property type="entry name" value="5TM_YidC_Alb3"/>
    <property type="match status" value="1"/>
</dbReference>
<dbReference type="CDD" id="cd19961">
    <property type="entry name" value="EcYidC-like_peri"/>
    <property type="match status" value="1"/>
</dbReference>
<dbReference type="FunFam" id="2.70.98.90:FF:000001">
    <property type="entry name" value="Membrane protein insertase YidC"/>
    <property type="match status" value="1"/>
</dbReference>
<dbReference type="Gene3D" id="2.70.98.90">
    <property type="match status" value="1"/>
</dbReference>
<dbReference type="HAMAP" id="MF_01810">
    <property type="entry name" value="YidC_type1"/>
    <property type="match status" value="1"/>
</dbReference>
<dbReference type="InterPro" id="IPR019998">
    <property type="entry name" value="Membr_insert_YidC"/>
</dbReference>
<dbReference type="InterPro" id="IPR028053">
    <property type="entry name" value="Membr_insert_YidC_N"/>
</dbReference>
<dbReference type="InterPro" id="IPR001708">
    <property type="entry name" value="YidC/ALB3/OXA1/COX18"/>
</dbReference>
<dbReference type="InterPro" id="IPR028055">
    <property type="entry name" value="YidC/Oxa/ALB_C"/>
</dbReference>
<dbReference type="InterPro" id="IPR047196">
    <property type="entry name" value="YidC_ALB_C"/>
</dbReference>
<dbReference type="InterPro" id="IPR038221">
    <property type="entry name" value="YidC_periplasmic_sf"/>
</dbReference>
<dbReference type="NCBIfam" id="NF002351">
    <property type="entry name" value="PRK01318.1-1"/>
    <property type="match status" value="1"/>
</dbReference>
<dbReference type="NCBIfam" id="NF002352">
    <property type="entry name" value="PRK01318.1-3"/>
    <property type="match status" value="1"/>
</dbReference>
<dbReference type="NCBIfam" id="NF002353">
    <property type="entry name" value="PRK01318.1-4"/>
    <property type="match status" value="1"/>
</dbReference>
<dbReference type="NCBIfam" id="TIGR03593">
    <property type="entry name" value="yidC_nterm"/>
    <property type="match status" value="1"/>
</dbReference>
<dbReference type="NCBIfam" id="TIGR03592">
    <property type="entry name" value="yidC_oxa1_cterm"/>
    <property type="match status" value="1"/>
</dbReference>
<dbReference type="PANTHER" id="PTHR12428:SF65">
    <property type="entry name" value="CYTOCHROME C OXIDASE ASSEMBLY PROTEIN COX18, MITOCHONDRIAL"/>
    <property type="match status" value="1"/>
</dbReference>
<dbReference type="PANTHER" id="PTHR12428">
    <property type="entry name" value="OXA1"/>
    <property type="match status" value="1"/>
</dbReference>
<dbReference type="Pfam" id="PF02096">
    <property type="entry name" value="60KD_IMP"/>
    <property type="match status" value="1"/>
</dbReference>
<dbReference type="Pfam" id="PF14849">
    <property type="entry name" value="YidC_periplas"/>
    <property type="match status" value="1"/>
</dbReference>
<dbReference type="PRINTS" id="PR00701">
    <property type="entry name" value="60KDINNERMP"/>
</dbReference>
<dbReference type="PRINTS" id="PR01900">
    <property type="entry name" value="YIDCPROTEIN"/>
</dbReference>
<proteinExistence type="inferred from homology"/>
<evidence type="ECO:0000255" key="1">
    <source>
        <dbReference type="HAMAP-Rule" id="MF_01810"/>
    </source>
</evidence>
<evidence type="ECO:0000256" key="2">
    <source>
        <dbReference type="SAM" id="MobiDB-lite"/>
    </source>
</evidence>
<gene>
    <name evidence="1" type="primary">yidC</name>
    <name type="ordered locus">EFER_4002</name>
</gene>
<feature type="chain" id="PRO_1000187667" description="Membrane protein insertase YidC">
    <location>
        <begin position="1"/>
        <end position="548"/>
    </location>
</feature>
<feature type="transmembrane region" description="Helical" evidence="1">
    <location>
        <begin position="6"/>
        <end position="26"/>
    </location>
</feature>
<feature type="transmembrane region" description="Helical" evidence="1">
    <location>
        <begin position="350"/>
        <end position="370"/>
    </location>
</feature>
<feature type="transmembrane region" description="Helical" evidence="1">
    <location>
        <begin position="420"/>
        <end position="440"/>
    </location>
</feature>
<feature type="transmembrane region" description="Helical" evidence="1">
    <location>
        <begin position="458"/>
        <end position="478"/>
    </location>
</feature>
<feature type="transmembrane region" description="Helical" evidence="1">
    <location>
        <begin position="499"/>
        <end position="519"/>
    </location>
</feature>
<feature type="region of interest" description="Disordered" evidence="2">
    <location>
        <begin position="28"/>
        <end position="55"/>
    </location>
</feature>
<feature type="compositionally biased region" description="Low complexity" evidence="2">
    <location>
        <begin position="30"/>
        <end position="50"/>
    </location>
</feature>
<organism>
    <name type="scientific">Escherichia fergusonii (strain ATCC 35469 / DSM 13698 / CCUG 18766 / IAM 14443 / JCM 21226 / LMG 7866 / NBRC 102419 / NCTC 12128 / CDC 0568-73)</name>
    <dbReference type="NCBI Taxonomy" id="585054"/>
    <lineage>
        <taxon>Bacteria</taxon>
        <taxon>Pseudomonadati</taxon>
        <taxon>Pseudomonadota</taxon>
        <taxon>Gammaproteobacteria</taxon>
        <taxon>Enterobacterales</taxon>
        <taxon>Enterobacteriaceae</taxon>
        <taxon>Escherichia</taxon>
    </lineage>
</organism>
<comment type="function">
    <text evidence="1">Required for the insertion and/or proper folding and/or complex formation of integral membrane proteins into the membrane. Involved in integration of membrane proteins that insert both dependently and independently of the Sec translocase complex, as well as at least some lipoproteins. Aids folding of multispanning membrane proteins.</text>
</comment>
<comment type="subunit">
    <text evidence="1">Interacts with the Sec translocase complex via SecD. Specifically interacts with transmembrane segments of nascent integral membrane proteins during membrane integration.</text>
</comment>
<comment type="subcellular location">
    <subcellularLocation>
        <location evidence="1">Cell inner membrane</location>
        <topology evidence="1">Multi-pass membrane protein</topology>
    </subcellularLocation>
</comment>
<comment type="similarity">
    <text evidence="1">Belongs to the OXA1/ALB3/YidC family. Type 1 subfamily.</text>
</comment>
<keyword id="KW-0997">Cell inner membrane</keyword>
<keyword id="KW-1003">Cell membrane</keyword>
<keyword id="KW-0143">Chaperone</keyword>
<keyword id="KW-0472">Membrane</keyword>
<keyword id="KW-0653">Protein transport</keyword>
<keyword id="KW-0812">Transmembrane</keyword>
<keyword id="KW-1133">Transmembrane helix</keyword>
<keyword id="KW-0813">Transport</keyword>
<reference key="1">
    <citation type="journal article" date="2009" name="PLoS Genet.">
        <title>Organised genome dynamics in the Escherichia coli species results in highly diverse adaptive paths.</title>
        <authorList>
            <person name="Touchon M."/>
            <person name="Hoede C."/>
            <person name="Tenaillon O."/>
            <person name="Barbe V."/>
            <person name="Baeriswyl S."/>
            <person name="Bidet P."/>
            <person name="Bingen E."/>
            <person name="Bonacorsi S."/>
            <person name="Bouchier C."/>
            <person name="Bouvet O."/>
            <person name="Calteau A."/>
            <person name="Chiapello H."/>
            <person name="Clermont O."/>
            <person name="Cruveiller S."/>
            <person name="Danchin A."/>
            <person name="Diard M."/>
            <person name="Dossat C."/>
            <person name="Karoui M.E."/>
            <person name="Frapy E."/>
            <person name="Garry L."/>
            <person name="Ghigo J.M."/>
            <person name="Gilles A.M."/>
            <person name="Johnson J."/>
            <person name="Le Bouguenec C."/>
            <person name="Lescat M."/>
            <person name="Mangenot S."/>
            <person name="Martinez-Jehanne V."/>
            <person name="Matic I."/>
            <person name="Nassif X."/>
            <person name="Oztas S."/>
            <person name="Petit M.A."/>
            <person name="Pichon C."/>
            <person name="Rouy Z."/>
            <person name="Ruf C.S."/>
            <person name="Schneider D."/>
            <person name="Tourret J."/>
            <person name="Vacherie B."/>
            <person name="Vallenet D."/>
            <person name="Medigue C."/>
            <person name="Rocha E.P.C."/>
            <person name="Denamur E."/>
        </authorList>
    </citation>
    <scope>NUCLEOTIDE SEQUENCE [LARGE SCALE GENOMIC DNA]</scope>
    <source>
        <strain>ATCC 35469 / DSM 13698 / BCRC 15582 / CCUG 18766 / IAM 14443 / JCM 21226 / LMG 7866 / NBRC 102419 / NCTC 12128 / CDC 0568-73</strain>
    </source>
</reference>
<accession>B7LK48</accession>
<name>YIDC_ESCF3</name>
<sequence>MDSQRNLLVIALLFVSFMIWQAWEQDKNPQPQAQQTTQTTTTAAGSAADQGVPASGQGKLISVKTDVLDLTINTRGGDVEQALLPAYPKELNSTQPFQLLETSPQFIYQAQSGLTGRDGPDNPANGPRPLYNVEKDAYVLAEGQNELQVPMTYTDAAGNTFTKTFILKRGDYAVNVNYNVQNAGEKPLEISTFGQLKQSITLPPYLDTGSSNFALHTFRGAAYSTPDEKYEKYKFDTIADNENLNISSKGGWVAMLQQYFATAWIPHNDGTNNFYTANLGNGIAAIGYKSQPVLVQPGQTGAMNSTLWVGPEIQDKMAAVAPHLDLTVDYGWLWFISQPLFKLLKWIHSFVGNWGFSIIIITFIVRGIMYPLTKAQYTSMAKMRMLQPKIQAMRERLGDDKQRISQEMMALYKAEKVNPLGGCFPLLIQMPIFLALYYMLMGSVELRQAPFALWIHDLSAQDPYYILPILMGVTMFFIQKMSPTTVTDPMQQKIMTFMPVIFTVFFLWFPSGLVLYYIVSNLVTIIQQQLIYRGLEKRGLHSREKKKS</sequence>